<keyword id="KW-0378">Hydrolase</keyword>
<keyword id="KW-0460">Magnesium</keyword>
<name>DGTP_YERPA</name>
<protein>
    <recommendedName>
        <fullName evidence="1">Deoxyguanosinetriphosphate triphosphohydrolase</fullName>
        <shortName evidence="1">dGTP triphosphohydrolase</shortName>
        <shortName evidence="1">dGTPase</shortName>
        <ecNumber evidence="1">3.1.5.1</ecNumber>
    </recommendedName>
</protein>
<gene>
    <name evidence="1" type="primary">dgt</name>
    <name type="ordered locus">YPA_2882</name>
</gene>
<reference key="1">
    <citation type="journal article" date="2006" name="J. Bacteriol.">
        <title>Complete genome sequence of Yersinia pestis strains Antiqua and Nepal516: evidence of gene reduction in an emerging pathogen.</title>
        <authorList>
            <person name="Chain P.S.G."/>
            <person name="Hu P."/>
            <person name="Malfatti S.A."/>
            <person name="Radnedge L."/>
            <person name="Larimer F."/>
            <person name="Vergez L.M."/>
            <person name="Worsham P."/>
            <person name="Chu M.C."/>
            <person name="Andersen G.L."/>
        </authorList>
    </citation>
    <scope>NUCLEOTIDE SEQUENCE [LARGE SCALE GENOMIC DNA]</scope>
    <source>
        <strain>Antiqua</strain>
    </source>
</reference>
<feature type="chain" id="PRO_1000006555" description="Deoxyguanosinetriphosphate triphosphohydrolase">
    <location>
        <begin position="1"/>
        <end position="506"/>
    </location>
</feature>
<feature type="domain" description="HD" evidence="2">
    <location>
        <begin position="66"/>
        <end position="274"/>
    </location>
</feature>
<proteinExistence type="inferred from homology"/>
<organism>
    <name type="scientific">Yersinia pestis bv. Antiqua (strain Antiqua)</name>
    <dbReference type="NCBI Taxonomy" id="360102"/>
    <lineage>
        <taxon>Bacteria</taxon>
        <taxon>Pseudomonadati</taxon>
        <taxon>Pseudomonadota</taxon>
        <taxon>Gammaproteobacteria</taxon>
        <taxon>Enterobacterales</taxon>
        <taxon>Yersiniaceae</taxon>
        <taxon>Yersinia</taxon>
    </lineage>
</organism>
<comment type="function">
    <text evidence="1">dGTPase preferentially hydrolyzes dGTP over the other canonical NTPs.</text>
</comment>
<comment type="catalytic activity">
    <reaction evidence="1">
        <text>dGTP + H2O = 2'-deoxyguanosine + triphosphate + H(+)</text>
        <dbReference type="Rhea" id="RHEA:15193"/>
        <dbReference type="ChEBI" id="CHEBI:15377"/>
        <dbReference type="ChEBI" id="CHEBI:15378"/>
        <dbReference type="ChEBI" id="CHEBI:17172"/>
        <dbReference type="ChEBI" id="CHEBI:18036"/>
        <dbReference type="ChEBI" id="CHEBI:61429"/>
        <dbReference type="EC" id="3.1.5.1"/>
    </reaction>
</comment>
<comment type="cofactor">
    <cofactor evidence="1">
        <name>Mg(2+)</name>
        <dbReference type="ChEBI" id="CHEBI:18420"/>
    </cofactor>
</comment>
<comment type="subunit">
    <text evidence="1">Homotetramer.</text>
</comment>
<comment type="similarity">
    <text evidence="1">Belongs to the dGTPase family. Type 1 subfamily.</text>
</comment>
<evidence type="ECO:0000255" key="1">
    <source>
        <dbReference type="HAMAP-Rule" id="MF_00030"/>
    </source>
</evidence>
<evidence type="ECO:0000255" key="2">
    <source>
        <dbReference type="PROSITE-ProRule" id="PRU01175"/>
    </source>
</evidence>
<sequence length="506" mass="58424">MSGIDFKQKISFQRPFSKPSSAEDEYEITRVFESDRGRIVNSAAIRRLQQKTQVFPLERNAAVRSRLTHSLEVQQVGRYIAKEILNRFKQDKKITAYGLDKLLDPFESIVEMACLMHDIGNPPFGHFGESAINDWFTKRMDPNGGSGSEPQSTDQCQVDVLKLCEGETELNILRSKIRHDLSQFEGNAQAIRLVHSLLKLNLTYAQVGCILKYTKPAYWSAPIPASHNYLMKKPGFYLAEENYVKELRRELNMEEFDRFPLTYIMEAADDISYCIADLEDAVEKNIFSVEQLYDHMSQEWGAVTPGDLFDKVVGAAFRQLGREQGRRSSEDQFFMYLRVNTVGKLVPHAAQRFIENLPAVFSGSFNQALLEDSSAACKLLQIFKRVAVKHVFNHPEVEQLELQGYRVISGLLDIYSPLLAMPETAFTQLVADDRHRKYPIETRLFHKLSIKHRLAYAESAERIRNLPSEQYEIYEYYYRARLIQDYISGMTDLYAYDEYRRLMAAE</sequence>
<accession>Q1C3X8</accession>
<dbReference type="EC" id="3.1.5.1" evidence="1"/>
<dbReference type="EMBL" id="CP000308">
    <property type="protein sequence ID" value="ABG14844.1"/>
    <property type="molecule type" value="Genomic_DNA"/>
</dbReference>
<dbReference type="RefSeq" id="WP_002209369.1">
    <property type="nucleotide sequence ID" value="NZ_CP009906.1"/>
</dbReference>
<dbReference type="SMR" id="Q1C3X8"/>
<dbReference type="GeneID" id="57975326"/>
<dbReference type="KEGG" id="ypa:YPA_2882"/>
<dbReference type="Proteomes" id="UP000001971">
    <property type="component" value="Chromosome"/>
</dbReference>
<dbReference type="GO" id="GO:0008832">
    <property type="term" value="F:dGTPase activity"/>
    <property type="evidence" value="ECO:0007669"/>
    <property type="project" value="UniProtKB-UniRule"/>
</dbReference>
<dbReference type="GO" id="GO:0000287">
    <property type="term" value="F:magnesium ion binding"/>
    <property type="evidence" value="ECO:0007669"/>
    <property type="project" value="UniProtKB-UniRule"/>
</dbReference>
<dbReference type="GO" id="GO:0006203">
    <property type="term" value="P:dGTP catabolic process"/>
    <property type="evidence" value="ECO:0007669"/>
    <property type="project" value="InterPro"/>
</dbReference>
<dbReference type="CDD" id="cd00077">
    <property type="entry name" value="HDc"/>
    <property type="match status" value="1"/>
</dbReference>
<dbReference type="FunFam" id="1.10.3210.10:FF:000009">
    <property type="entry name" value="Deoxyguanosinetriphosphate triphosphohydrolase"/>
    <property type="match status" value="1"/>
</dbReference>
<dbReference type="FunFam" id="1.10.3210.10:FF:000010">
    <property type="entry name" value="Deoxyguanosinetriphosphate triphosphohydrolase"/>
    <property type="match status" value="1"/>
</dbReference>
<dbReference type="FunFam" id="1.10.3410.10:FF:000001">
    <property type="entry name" value="Deoxyguanosinetriphosphate triphosphohydrolase"/>
    <property type="match status" value="1"/>
</dbReference>
<dbReference type="Gene3D" id="1.10.3210.10">
    <property type="entry name" value="Hypothetical protein af1432"/>
    <property type="match status" value="2"/>
</dbReference>
<dbReference type="Gene3D" id="1.10.3410.10">
    <property type="entry name" value="putative deoxyguanosinetriphosphate triphosphohydrolase like domain"/>
    <property type="match status" value="1"/>
</dbReference>
<dbReference type="HAMAP" id="MF_00030">
    <property type="entry name" value="dGTPase_type1"/>
    <property type="match status" value="1"/>
</dbReference>
<dbReference type="InterPro" id="IPR023293">
    <property type="entry name" value="dGTP_triP_hydro_central_sf"/>
</dbReference>
<dbReference type="InterPro" id="IPR006261">
    <property type="entry name" value="dGTPase"/>
</dbReference>
<dbReference type="InterPro" id="IPR050135">
    <property type="entry name" value="dGTPase-like"/>
</dbReference>
<dbReference type="InterPro" id="IPR020779">
    <property type="entry name" value="dNTPase_1"/>
</dbReference>
<dbReference type="InterPro" id="IPR003607">
    <property type="entry name" value="HD/PDEase_dom"/>
</dbReference>
<dbReference type="InterPro" id="IPR006674">
    <property type="entry name" value="HD_domain"/>
</dbReference>
<dbReference type="InterPro" id="IPR026875">
    <property type="entry name" value="PHydrolase_assoc_dom"/>
</dbReference>
<dbReference type="NCBIfam" id="TIGR01353">
    <property type="entry name" value="dGTP_triPase"/>
    <property type="match status" value="1"/>
</dbReference>
<dbReference type="NCBIfam" id="NF003429">
    <property type="entry name" value="PRK04926.1"/>
    <property type="match status" value="1"/>
</dbReference>
<dbReference type="PANTHER" id="PTHR11373:SF32">
    <property type="entry name" value="DEOXYGUANOSINETRIPHOSPHATE TRIPHOSPHOHYDROLASE"/>
    <property type="match status" value="1"/>
</dbReference>
<dbReference type="PANTHER" id="PTHR11373">
    <property type="entry name" value="DEOXYNUCLEOSIDE TRIPHOSPHATE TRIPHOSPHOHYDROLASE"/>
    <property type="match status" value="1"/>
</dbReference>
<dbReference type="Pfam" id="PF01966">
    <property type="entry name" value="HD"/>
    <property type="match status" value="1"/>
</dbReference>
<dbReference type="Pfam" id="PF13286">
    <property type="entry name" value="HD_assoc"/>
    <property type="match status" value="1"/>
</dbReference>
<dbReference type="SMART" id="SM00471">
    <property type="entry name" value="HDc"/>
    <property type="match status" value="1"/>
</dbReference>
<dbReference type="SUPFAM" id="SSF109604">
    <property type="entry name" value="HD-domain/PDEase-like"/>
    <property type="match status" value="1"/>
</dbReference>
<dbReference type="PROSITE" id="PS51831">
    <property type="entry name" value="HD"/>
    <property type="match status" value="1"/>
</dbReference>